<feature type="signal peptide" evidence="1">
    <location>
        <begin position="1"/>
        <end position="30"/>
    </location>
</feature>
<feature type="chain" id="PRO_0000013838" description="Uncharacterized protein YncE">
    <location>
        <begin position="31"/>
        <end position="353"/>
    </location>
</feature>
<feature type="strand" evidence="4">
    <location>
        <begin position="34"/>
        <end position="49"/>
    </location>
</feature>
<feature type="turn" evidence="4">
    <location>
        <begin position="50"/>
        <end position="53"/>
    </location>
</feature>
<feature type="strand" evidence="4">
    <location>
        <begin position="54"/>
        <end position="59"/>
    </location>
</feature>
<feature type="turn" evidence="4">
    <location>
        <begin position="63"/>
        <end position="65"/>
    </location>
</feature>
<feature type="strand" evidence="4">
    <location>
        <begin position="66"/>
        <end position="74"/>
    </location>
</feature>
<feature type="turn" evidence="4">
    <location>
        <begin position="76"/>
        <end position="78"/>
    </location>
</feature>
<feature type="strand" evidence="4">
    <location>
        <begin position="81"/>
        <end position="89"/>
    </location>
</feature>
<feature type="strand" evidence="4">
    <location>
        <begin position="93"/>
        <end position="97"/>
    </location>
</feature>
<feature type="turn" evidence="4">
    <location>
        <begin position="98"/>
        <end position="101"/>
    </location>
</feature>
<feature type="strand" evidence="4">
    <location>
        <begin position="102"/>
        <end position="107"/>
    </location>
</feature>
<feature type="turn" evidence="4">
    <location>
        <begin position="108"/>
        <end position="111"/>
    </location>
</feature>
<feature type="strand" evidence="4">
    <location>
        <begin position="112"/>
        <end position="117"/>
    </location>
</feature>
<feature type="turn" evidence="4">
    <location>
        <begin position="118"/>
        <end position="120"/>
    </location>
</feature>
<feature type="strand" evidence="4">
    <location>
        <begin position="123"/>
        <end position="129"/>
    </location>
</feature>
<feature type="strand" evidence="4">
    <location>
        <begin position="142"/>
        <end position="149"/>
    </location>
</feature>
<feature type="turn" evidence="4">
    <location>
        <begin position="150"/>
        <end position="153"/>
    </location>
</feature>
<feature type="strand" evidence="4">
    <location>
        <begin position="154"/>
        <end position="163"/>
    </location>
</feature>
<feature type="strand" evidence="4">
    <location>
        <begin position="165"/>
        <end position="170"/>
    </location>
</feature>
<feature type="turn" evidence="4">
    <location>
        <begin position="171"/>
        <end position="174"/>
    </location>
</feature>
<feature type="strand" evidence="4">
    <location>
        <begin position="175"/>
        <end position="180"/>
    </location>
</feature>
<feature type="strand" evidence="4">
    <location>
        <begin position="191"/>
        <end position="193"/>
    </location>
</feature>
<feature type="turn" evidence="4">
    <location>
        <begin position="194"/>
        <end position="197"/>
    </location>
</feature>
<feature type="strand" evidence="4">
    <location>
        <begin position="198"/>
        <end position="202"/>
    </location>
</feature>
<feature type="strand" evidence="4">
    <location>
        <begin position="206"/>
        <end position="212"/>
    </location>
</feature>
<feature type="turn" evidence="4">
    <location>
        <begin position="213"/>
        <end position="216"/>
    </location>
</feature>
<feature type="strand" evidence="4">
    <location>
        <begin position="217"/>
        <end position="223"/>
    </location>
</feature>
<feature type="strand" evidence="4">
    <location>
        <begin position="227"/>
        <end position="229"/>
    </location>
</feature>
<feature type="strand" evidence="4">
    <location>
        <begin position="233"/>
        <end position="239"/>
    </location>
</feature>
<feature type="turn" evidence="4">
    <location>
        <begin position="240"/>
        <end position="243"/>
    </location>
</feature>
<feature type="strand" evidence="4">
    <location>
        <begin position="244"/>
        <end position="259"/>
    </location>
</feature>
<feature type="turn" evidence="4">
    <location>
        <begin position="260"/>
        <end position="262"/>
    </location>
</feature>
<feature type="strand" evidence="4">
    <location>
        <begin position="265"/>
        <end position="270"/>
    </location>
</feature>
<feature type="strand" evidence="4">
    <location>
        <begin position="277"/>
        <end position="280"/>
    </location>
</feature>
<feature type="turn" evidence="4">
    <location>
        <begin position="281"/>
        <end position="284"/>
    </location>
</feature>
<feature type="strand" evidence="4">
    <location>
        <begin position="285"/>
        <end position="290"/>
    </location>
</feature>
<feature type="turn" evidence="4">
    <location>
        <begin position="291"/>
        <end position="294"/>
    </location>
</feature>
<feature type="strand" evidence="4">
    <location>
        <begin position="295"/>
        <end position="300"/>
    </location>
</feature>
<feature type="turn" evidence="4">
    <location>
        <begin position="301"/>
        <end position="304"/>
    </location>
</feature>
<feature type="strand" evidence="4">
    <location>
        <begin position="305"/>
        <end position="311"/>
    </location>
</feature>
<feature type="strand" evidence="4">
    <location>
        <begin position="314"/>
        <end position="321"/>
    </location>
</feature>
<feature type="strand" evidence="4">
    <location>
        <begin position="327"/>
        <end position="333"/>
    </location>
</feature>
<feature type="strand" evidence="5">
    <location>
        <begin position="338"/>
        <end position="340"/>
    </location>
</feature>
<feature type="strand" evidence="4">
    <location>
        <begin position="346"/>
        <end position="352"/>
    </location>
</feature>
<dbReference type="EMBL" id="U00096">
    <property type="protein sequence ID" value="AAC74534.1"/>
    <property type="molecule type" value="Genomic_DNA"/>
</dbReference>
<dbReference type="EMBL" id="AP009048">
    <property type="protein sequence ID" value="BAE76445.1"/>
    <property type="molecule type" value="Genomic_DNA"/>
</dbReference>
<dbReference type="PIR" id="G64897">
    <property type="entry name" value="G64897"/>
</dbReference>
<dbReference type="RefSeq" id="NP_415969.1">
    <property type="nucleotide sequence ID" value="NC_000913.3"/>
</dbReference>
<dbReference type="RefSeq" id="WP_000550695.1">
    <property type="nucleotide sequence ID" value="NZ_SSZK01000021.1"/>
</dbReference>
<dbReference type="PDB" id="3VGZ">
    <property type="method" value="X-ray"/>
    <property type="resolution" value="1.70 A"/>
    <property type="chains" value="A/B/C/D=1-353"/>
</dbReference>
<dbReference type="PDB" id="3VH0">
    <property type="method" value="X-ray"/>
    <property type="resolution" value="2.90 A"/>
    <property type="chains" value="A/B/C/D=1-353"/>
</dbReference>
<dbReference type="PDB" id="7SEU">
    <property type="method" value="X-ray"/>
    <property type="resolution" value="2.50 A"/>
    <property type="chains" value="A/B/C/D=1-353"/>
</dbReference>
<dbReference type="PDBsum" id="3VGZ"/>
<dbReference type="PDBsum" id="3VH0"/>
<dbReference type="PDBsum" id="7SEU"/>
<dbReference type="SMR" id="P76116"/>
<dbReference type="BioGRID" id="4260198">
    <property type="interactions" value="10"/>
</dbReference>
<dbReference type="DIP" id="DIP-28079N"/>
<dbReference type="FunCoup" id="P76116">
    <property type="interactions" value="86"/>
</dbReference>
<dbReference type="IntAct" id="P76116">
    <property type="interactions" value="4"/>
</dbReference>
<dbReference type="STRING" id="511145.b1452"/>
<dbReference type="jPOST" id="P76116"/>
<dbReference type="PaxDb" id="511145-b1452"/>
<dbReference type="EnsemblBacteria" id="AAC74534">
    <property type="protein sequence ID" value="AAC74534"/>
    <property type="gene ID" value="b1452"/>
</dbReference>
<dbReference type="GeneID" id="946006"/>
<dbReference type="KEGG" id="ecj:JW1447"/>
<dbReference type="KEGG" id="eco:b1452"/>
<dbReference type="KEGG" id="ecoc:C3026_08445"/>
<dbReference type="PATRIC" id="fig|1411691.4.peg.816"/>
<dbReference type="EchoBASE" id="EB3537"/>
<dbReference type="eggNOG" id="COG3391">
    <property type="taxonomic scope" value="Bacteria"/>
</dbReference>
<dbReference type="HOGENOM" id="CLU_056358_1_0_6"/>
<dbReference type="InParanoid" id="P76116"/>
<dbReference type="OMA" id="QDDGKEH"/>
<dbReference type="OrthoDB" id="7767057at2"/>
<dbReference type="PhylomeDB" id="P76116"/>
<dbReference type="BioCyc" id="EcoCyc:G6763-MONOMER"/>
<dbReference type="EvolutionaryTrace" id="P76116"/>
<dbReference type="PRO" id="PR:P76116"/>
<dbReference type="Proteomes" id="UP000000625">
    <property type="component" value="Chromosome"/>
</dbReference>
<dbReference type="GO" id="GO:0030288">
    <property type="term" value="C:outer membrane-bounded periplasmic space"/>
    <property type="evidence" value="ECO:0000316"/>
    <property type="project" value="EcoCyc"/>
</dbReference>
<dbReference type="GO" id="GO:0003677">
    <property type="term" value="F:DNA binding"/>
    <property type="evidence" value="ECO:0000314"/>
    <property type="project" value="EcoCyc"/>
</dbReference>
<dbReference type="FunFam" id="2.130.10.10:FF:000423">
    <property type="entry name" value="YncE family protein"/>
    <property type="match status" value="1"/>
</dbReference>
<dbReference type="Gene3D" id="2.130.10.10">
    <property type="entry name" value="YVTN repeat-like/Quinoprotein amine dehydrogenase"/>
    <property type="match status" value="1"/>
</dbReference>
<dbReference type="InterPro" id="IPR011048">
    <property type="entry name" value="Haem_d1_sf"/>
</dbReference>
<dbReference type="InterPro" id="IPR051200">
    <property type="entry name" value="Host-pathogen_enzymatic-act"/>
</dbReference>
<dbReference type="InterPro" id="IPR015943">
    <property type="entry name" value="WD40/YVTN_repeat-like_dom_sf"/>
</dbReference>
<dbReference type="InterPro" id="IPR048433">
    <property type="entry name" value="YNCE-like_beta-prop"/>
</dbReference>
<dbReference type="PANTHER" id="PTHR47197:SF3">
    <property type="entry name" value="DIHYDRO-HEME D1 DEHYDROGENASE"/>
    <property type="match status" value="1"/>
</dbReference>
<dbReference type="PANTHER" id="PTHR47197">
    <property type="entry name" value="PROTEIN NIRF"/>
    <property type="match status" value="1"/>
</dbReference>
<dbReference type="Pfam" id="PF21783">
    <property type="entry name" value="YNCE"/>
    <property type="match status" value="1"/>
</dbReference>
<dbReference type="SUPFAM" id="SSF51004">
    <property type="entry name" value="C-terminal (heme d1) domain of cytochrome cd1-nitrite reductase"/>
    <property type="match status" value="1"/>
</dbReference>
<accession>P76116</accession>
<accession>Q2MBB1</accession>
<name>YNCE_ECOLI</name>
<evidence type="ECO:0000255" key="1"/>
<evidence type="ECO:0000269" key="2">
    <source>
    </source>
</evidence>
<evidence type="ECO:0000269" key="3">
    <source>
    </source>
</evidence>
<evidence type="ECO:0007829" key="4">
    <source>
        <dbReference type="PDB" id="3VGZ"/>
    </source>
</evidence>
<evidence type="ECO:0007829" key="5">
    <source>
        <dbReference type="PDB" id="7SEU"/>
    </source>
</evidence>
<organism>
    <name type="scientific">Escherichia coli (strain K12)</name>
    <dbReference type="NCBI Taxonomy" id="83333"/>
    <lineage>
        <taxon>Bacteria</taxon>
        <taxon>Pseudomonadati</taxon>
        <taxon>Pseudomonadota</taxon>
        <taxon>Gammaproteobacteria</taxon>
        <taxon>Enterobacterales</taxon>
        <taxon>Enterobacteriaceae</taxon>
        <taxon>Escherichia</taxon>
    </lineage>
</organism>
<protein>
    <recommendedName>
        <fullName>Uncharacterized protein YncE</fullName>
    </recommendedName>
</protein>
<comment type="subunit">
    <text evidence="3">Monomer.</text>
</comment>
<comment type="induction">
    <text evidence="2">Repressed by Fur.</text>
</comment>
<comment type="miscellaneous">
    <text>Preliminary crystallization indicates the presence of a single beta-propeller domain that contains 7 4-stranded beta-sheets.</text>
</comment>
<gene>
    <name type="primary">yncE</name>
    <name type="ordered locus">b1452</name>
    <name type="ordered locus">JW1447</name>
</gene>
<sequence length="353" mass="38613">MHLRHLFSSRLRGSLLLGSLLVVSSFSTQAAEEMLRKAVGKGAYEMAYSQQENALWLATSQSRKLDKGGVVYRLDPVTLEVTQAIHNDLKPFGATINNTTQTLWFGNTVNSAVTAIDAKTGEVKGRLVLDDRKRTEEVRPLQPRELVADDATNTVYISGIGKESVIWVVDGGNIKLKTAIQNTGKMSTGLALDSEGKRLYTTNADGELITIDTADNKILSRKKLLDDGKEHFFINISLDTARQRAFITDSKAAEVLVVDTRNGNILAKVAAPESLAVLFNPARNEAYVTHRQAGKVSVIDAKSYKVVKTFDTPTHPNSLALSADGKTLYVSVKQKSTKQQEATQPDDVIRIAL</sequence>
<reference key="1">
    <citation type="journal article" date="1997" name="Science">
        <title>The complete genome sequence of Escherichia coli K-12.</title>
        <authorList>
            <person name="Blattner F.R."/>
            <person name="Plunkett G. III"/>
            <person name="Bloch C.A."/>
            <person name="Perna N.T."/>
            <person name="Burland V."/>
            <person name="Riley M."/>
            <person name="Collado-Vides J."/>
            <person name="Glasner J.D."/>
            <person name="Rode C.K."/>
            <person name="Mayhew G.F."/>
            <person name="Gregor J."/>
            <person name="Davis N.W."/>
            <person name="Kirkpatrick H.A."/>
            <person name="Goeden M.A."/>
            <person name="Rose D.J."/>
            <person name="Mau B."/>
            <person name="Shao Y."/>
        </authorList>
    </citation>
    <scope>NUCLEOTIDE SEQUENCE [LARGE SCALE GENOMIC DNA]</scope>
    <source>
        <strain>K12 / MG1655 / ATCC 47076</strain>
    </source>
</reference>
<reference key="2">
    <citation type="journal article" date="2006" name="Mol. Syst. Biol.">
        <title>Highly accurate genome sequences of Escherichia coli K-12 strains MG1655 and W3110.</title>
        <authorList>
            <person name="Hayashi K."/>
            <person name="Morooka N."/>
            <person name="Yamamoto Y."/>
            <person name="Fujita K."/>
            <person name="Isono K."/>
            <person name="Choi S."/>
            <person name="Ohtsubo E."/>
            <person name="Baba T."/>
            <person name="Wanner B.L."/>
            <person name="Mori H."/>
            <person name="Horiuchi T."/>
        </authorList>
    </citation>
    <scope>NUCLEOTIDE SEQUENCE [LARGE SCALE GENOMIC DNA]</scope>
    <source>
        <strain>K12 / W3110 / ATCC 27325 / DSM 5911</strain>
    </source>
</reference>
<reference key="3">
    <citation type="journal article" date="2003" name="J. Biol. Chem.">
        <title>Global iron-dependent gene regulation in Escherichia coli. A new mechanism for iron homeostasis.</title>
        <authorList>
            <person name="McHugh J.P."/>
            <person name="Rodriguez-Quinones F."/>
            <person name="Abdul-Tehrani H."/>
            <person name="Svistunenko D.A."/>
            <person name="Poole R.K."/>
            <person name="Cooper C.E."/>
            <person name="Andrews S.C."/>
        </authorList>
    </citation>
    <scope>INDUCTION</scope>
</reference>
<reference key="4">
    <citation type="journal article" date="2006" name="J. Biol. Chem.">
        <title>Defining the role of the Escherichia coli chaperone SecB using comparative proteomics.</title>
        <authorList>
            <person name="Baars L."/>
            <person name="Ytterberg A.J."/>
            <person name="Drew D."/>
            <person name="Wagner S."/>
            <person name="Thilo C."/>
            <person name="van Wijk K.J."/>
            <person name="de Gier J.W."/>
        </authorList>
    </citation>
    <scope>IDENTIFICATION BY MASS SPECTROMETRY</scope>
    <scope>SUBSTRATE FOR SECB</scope>
    <source>
        <strain>K12 / MC4100</strain>
    </source>
</reference>
<reference key="5">
    <citation type="journal article" date="2008" name="Acta Crystallogr. F">
        <title>Overproduction, purification and preliminary X-ray diffraction analysis of YncE, an iron-regulated Sec-dependent periplasmic protein from Escherichia coli.</title>
        <authorList>
            <person name="Baba-Dikwa A."/>
            <person name="Thompson D."/>
            <person name="Spencer N.J."/>
            <person name="Andrews S.C."/>
            <person name="Watson K.A."/>
        </authorList>
    </citation>
    <scope>PRELIMINARY CRYSTALLIZATION</scope>
    <scope>SUBUNIT</scope>
</reference>
<proteinExistence type="evidence at protein level"/>
<keyword id="KW-0002">3D-structure</keyword>
<keyword id="KW-1185">Reference proteome</keyword>
<keyword id="KW-0732">Signal</keyword>